<name>IF2_XYLFT</name>
<evidence type="ECO:0000255" key="1">
    <source>
        <dbReference type="HAMAP-Rule" id="MF_00100"/>
    </source>
</evidence>
<evidence type="ECO:0000256" key="2">
    <source>
        <dbReference type="SAM" id="MobiDB-lite"/>
    </source>
</evidence>
<dbReference type="EMBL" id="AE009442">
    <property type="protein sequence ID" value="AAO28085.1"/>
    <property type="molecule type" value="Genomic_DNA"/>
</dbReference>
<dbReference type="RefSeq" id="WP_004572952.1">
    <property type="nucleotide sequence ID" value="NC_004556.1"/>
</dbReference>
<dbReference type="SMR" id="Q87EV4"/>
<dbReference type="GeneID" id="93903885"/>
<dbReference type="KEGG" id="xft:PD_0194"/>
<dbReference type="HOGENOM" id="CLU_006301_6_1_6"/>
<dbReference type="Proteomes" id="UP000002516">
    <property type="component" value="Chromosome"/>
</dbReference>
<dbReference type="GO" id="GO:0005829">
    <property type="term" value="C:cytosol"/>
    <property type="evidence" value="ECO:0007669"/>
    <property type="project" value="TreeGrafter"/>
</dbReference>
<dbReference type="GO" id="GO:0005525">
    <property type="term" value="F:GTP binding"/>
    <property type="evidence" value="ECO:0007669"/>
    <property type="project" value="UniProtKB-KW"/>
</dbReference>
<dbReference type="GO" id="GO:0003924">
    <property type="term" value="F:GTPase activity"/>
    <property type="evidence" value="ECO:0007669"/>
    <property type="project" value="UniProtKB-UniRule"/>
</dbReference>
<dbReference type="GO" id="GO:0097216">
    <property type="term" value="F:guanosine tetraphosphate binding"/>
    <property type="evidence" value="ECO:0007669"/>
    <property type="project" value="UniProtKB-ARBA"/>
</dbReference>
<dbReference type="GO" id="GO:0003743">
    <property type="term" value="F:translation initiation factor activity"/>
    <property type="evidence" value="ECO:0007669"/>
    <property type="project" value="UniProtKB-UniRule"/>
</dbReference>
<dbReference type="CDD" id="cd01887">
    <property type="entry name" value="IF2_eIF5B"/>
    <property type="match status" value="1"/>
</dbReference>
<dbReference type="CDD" id="cd03702">
    <property type="entry name" value="IF2_mtIF2_II"/>
    <property type="match status" value="1"/>
</dbReference>
<dbReference type="CDD" id="cd03692">
    <property type="entry name" value="mtIF2_IVc"/>
    <property type="match status" value="1"/>
</dbReference>
<dbReference type="FunFam" id="2.40.30.10:FF:000008">
    <property type="entry name" value="Translation initiation factor IF-2"/>
    <property type="match status" value="1"/>
</dbReference>
<dbReference type="FunFam" id="2.40.30.10:FF:000054">
    <property type="entry name" value="Translation initiation factor IF-2"/>
    <property type="match status" value="1"/>
</dbReference>
<dbReference type="FunFam" id="3.40.50.10050:FF:000001">
    <property type="entry name" value="Translation initiation factor IF-2"/>
    <property type="match status" value="1"/>
</dbReference>
<dbReference type="FunFam" id="3.40.50.300:FF:000019">
    <property type="entry name" value="Translation initiation factor IF-2"/>
    <property type="match status" value="1"/>
</dbReference>
<dbReference type="Gene3D" id="3.40.50.300">
    <property type="entry name" value="P-loop containing nucleotide triphosphate hydrolases"/>
    <property type="match status" value="1"/>
</dbReference>
<dbReference type="Gene3D" id="3.30.56.50">
    <property type="entry name" value="Putative DNA-binding domain, N-terminal subdomain of bacterial translation initiation factor IF2"/>
    <property type="match status" value="1"/>
</dbReference>
<dbReference type="Gene3D" id="2.40.30.10">
    <property type="entry name" value="Translation factors"/>
    <property type="match status" value="2"/>
</dbReference>
<dbReference type="Gene3D" id="3.40.50.10050">
    <property type="entry name" value="Translation initiation factor IF- 2, domain 3"/>
    <property type="match status" value="1"/>
</dbReference>
<dbReference type="HAMAP" id="MF_00100_B">
    <property type="entry name" value="IF_2_B"/>
    <property type="match status" value="1"/>
</dbReference>
<dbReference type="InterPro" id="IPR009061">
    <property type="entry name" value="DNA-bd_dom_put_sf"/>
</dbReference>
<dbReference type="InterPro" id="IPR053905">
    <property type="entry name" value="EF-G-like_DII"/>
</dbReference>
<dbReference type="InterPro" id="IPR004161">
    <property type="entry name" value="EFTu-like_2"/>
</dbReference>
<dbReference type="InterPro" id="IPR013575">
    <property type="entry name" value="IF2_assoc_dom_bac"/>
</dbReference>
<dbReference type="InterPro" id="IPR044145">
    <property type="entry name" value="IF2_II"/>
</dbReference>
<dbReference type="InterPro" id="IPR006847">
    <property type="entry name" value="IF2_N"/>
</dbReference>
<dbReference type="InterPro" id="IPR027417">
    <property type="entry name" value="P-loop_NTPase"/>
</dbReference>
<dbReference type="InterPro" id="IPR005225">
    <property type="entry name" value="Small_GTP-bd"/>
</dbReference>
<dbReference type="InterPro" id="IPR000795">
    <property type="entry name" value="T_Tr_GTP-bd_dom"/>
</dbReference>
<dbReference type="InterPro" id="IPR000178">
    <property type="entry name" value="TF_IF2_bacterial-like"/>
</dbReference>
<dbReference type="InterPro" id="IPR015760">
    <property type="entry name" value="TIF_IF2"/>
</dbReference>
<dbReference type="InterPro" id="IPR023115">
    <property type="entry name" value="TIF_IF2_dom3"/>
</dbReference>
<dbReference type="InterPro" id="IPR036925">
    <property type="entry name" value="TIF_IF2_dom3_sf"/>
</dbReference>
<dbReference type="InterPro" id="IPR009000">
    <property type="entry name" value="Transl_B-barrel_sf"/>
</dbReference>
<dbReference type="NCBIfam" id="TIGR00487">
    <property type="entry name" value="IF-2"/>
    <property type="match status" value="1"/>
</dbReference>
<dbReference type="NCBIfam" id="TIGR00231">
    <property type="entry name" value="small_GTP"/>
    <property type="match status" value="1"/>
</dbReference>
<dbReference type="PANTHER" id="PTHR43381:SF5">
    <property type="entry name" value="TR-TYPE G DOMAIN-CONTAINING PROTEIN"/>
    <property type="match status" value="1"/>
</dbReference>
<dbReference type="PANTHER" id="PTHR43381">
    <property type="entry name" value="TRANSLATION INITIATION FACTOR IF-2-RELATED"/>
    <property type="match status" value="1"/>
</dbReference>
<dbReference type="Pfam" id="PF22042">
    <property type="entry name" value="EF-G_D2"/>
    <property type="match status" value="1"/>
</dbReference>
<dbReference type="Pfam" id="PF00009">
    <property type="entry name" value="GTP_EFTU"/>
    <property type="match status" value="1"/>
</dbReference>
<dbReference type="Pfam" id="PF03144">
    <property type="entry name" value="GTP_EFTU_D2"/>
    <property type="match status" value="1"/>
</dbReference>
<dbReference type="Pfam" id="PF11987">
    <property type="entry name" value="IF-2"/>
    <property type="match status" value="1"/>
</dbReference>
<dbReference type="Pfam" id="PF08364">
    <property type="entry name" value="IF2_assoc"/>
    <property type="match status" value="1"/>
</dbReference>
<dbReference type="Pfam" id="PF04760">
    <property type="entry name" value="IF2_N"/>
    <property type="match status" value="1"/>
</dbReference>
<dbReference type="SUPFAM" id="SSF52156">
    <property type="entry name" value="Initiation factor IF2/eIF5b, domain 3"/>
    <property type="match status" value="1"/>
</dbReference>
<dbReference type="SUPFAM" id="SSF52540">
    <property type="entry name" value="P-loop containing nucleoside triphosphate hydrolases"/>
    <property type="match status" value="1"/>
</dbReference>
<dbReference type="SUPFAM" id="SSF46955">
    <property type="entry name" value="Putative DNA-binding domain"/>
    <property type="match status" value="1"/>
</dbReference>
<dbReference type="SUPFAM" id="SSF50447">
    <property type="entry name" value="Translation proteins"/>
    <property type="match status" value="2"/>
</dbReference>
<dbReference type="PROSITE" id="PS51722">
    <property type="entry name" value="G_TR_2"/>
    <property type="match status" value="1"/>
</dbReference>
<dbReference type="PROSITE" id="PS01176">
    <property type="entry name" value="IF2"/>
    <property type="match status" value="1"/>
</dbReference>
<proteinExistence type="inferred from homology"/>
<organism>
    <name type="scientific">Xylella fastidiosa (strain Temecula1 / ATCC 700964)</name>
    <dbReference type="NCBI Taxonomy" id="183190"/>
    <lineage>
        <taxon>Bacteria</taxon>
        <taxon>Pseudomonadati</taxon>
        <taxon>Pseudomonadota</taxon>
        <taxon>Gammaproteobacteria</taxon>
        <taxon>Lysobacterales</taxon>
        <taxon>Lysobacteraceae</taxon>
        <taxon>Xylella</taxon>
    </lineage>
</organism>
<protein>
    <recommendedName>
        <fullName evidence="1">Translation initiation factor IF-2</fullName>
    </recommendedName>
</protein>
<feature type="chain" id="PRO_0000137288" description="Translation initiation factor IF-2">
    <location>
        <begin position="1"/>
        <end position="892"/>
    </location>
</feature>
<feature type="domain" description="tr-type G">
    <location>
        <begin position="391"/>
        <end position="560"/>
    </location>
</feature>
<feature type="region of interest" description="Disordered" evidence="2">
    <location>
        <begin position="138"/>
        <end position="250"/>
    </location>
</feature>
<feature type="region of interest" description="Disordered" evidence="2">
    <location>
        <begin position="262"/>
        <end position="298"/>
    </location>
</feature>
<feature type="compositionally biased region" description="Basic and acidic residues" evidence="2">
    <location>
        <begin position="138"/>
        <end position="185"/>
    </location>
</feature>
<feature type="compositionally biased region" description="Low complexity" evidence="2">
    <location>
        <begin position="207"/>
        <end position="219"/>
    </location>
</feature>
<feature type="binding site" evidence="1">
    <location>
        <begin position="400"/>
        <end position="407"/>
    </location>
    <ligand>
        <name>GTP</name>
        <dbReference type="ChEBI" id="CHEBI:37565"/>
    </ligand>
</feature>
<feature type="binding site" evidence="1">
    <location>
        <begin position="446"/>
        <end position="450"/>
    </location>
    <ligand>
        <name>GTP</name>
        <dbReference type="ChEBI" id="CHEBI:37565"/>
    </ligand>
</feature>
<feature type="binding site" evidence="1">
    <location>
        <begin position="500"/>
        <end position="503"/>
    </location>
    <ligand>
        <name>GTP</name>
        <dbReference type="ChEBI" id="CHEBI:37565"/>
    </ligand>
</feature>
<sequence length="892" mass="97277">MSQQTTIRKLAELVNTPVEKLLEQLAGAGMKFSGPDQVVTSTEKMKLLGFLRRTHGKSDVSVGTVREAPKKITLNRRRLQEVTVNAGRNKTTVNVEVRQKRTYVKPPESEYHTPTKPPIELADAERVEILRKLEESRQRNLAEQQRLAEVDRQRVEEQERKRREEEQAELERQKTESRVVEEILVKTDSNSVKPVSKPISEERTRALPRTVRPTPAARPSVSRSDDRNSNGGVRHKARGSHVIVSDEDDSARRFAGQMHLTAAERARRGSNTRGKGGGSHRSATHRGNENSIRSSGAHGFERPTVAVVREVAVGDTITVADLAQKLALKSGDMVKALFKMGVMVTITQTIDHDTAVLVSEELGHKVTRASSSDFEDALLAHTEELHGEPVPRPPVVTIMGHVDHGKTSLLDYIRRTKIAVGEAGGITQHIGAYHVETPRGVISFLDTPGHAAFTSMRARGAKITDIVVLVVAADDGVMPQTKEAVQHARAAGVPLIVAVSKIDKSTADPQRVKNELLTESVVAEEFGGDTQFVELSAKTGVGVDALLDAISIQAEVLELKAVIEGRATGTVIESSLDKGRGPVATVLVQQGRLKKGDYLVCGTHYGRVRALFDEVGHQPLAASPSIPVQVLGLSGVPDAGDDFVVVDDERLAKDVAQQREAKRRESRLVTSAGNRMEDILAQMGKGENQQVLNLLIKADVQGSLEALKQALVALSNDDIRINVIHVGVGGITESDANSAVTSKATVIGFNVRADASARKIIEVNGVDLRYFSIIYDVIDQVKQVASGLLGVEIREEIIGVAEVRDVFRSSKFGAVAGCMIIEGVVKRSKPIRVLRDNTVVFEGELESLRRFKENVDEVRNSIECGIGVKAYNDVRVGDSIECFERIEVARTL</sequence>
<reference key="1">
    <citation type="journal article" date="2003" name="J. Bacteriol.">
        <title>Comparative analyses of the complete genome sequences of Pierce's disease and citrus variegated chlorosis strains of Xylella fastidiosa.</title>
        <authorList>
            <person name="Van Sluys M.A."/>
            <person name="de Oliveira M.C."/>
            <person name="Monteiro-Vitorello C.B."/>
            <person name="Miyaki C.Y."/>
            <person name="Furlan L.R."/>
            <person name="Camargo L.E.A."/>
            <person name="da Silva A.C.R."/>
            <person name="Moon D.H."/>
            <person name="Takita M.A."/>
            <person name="Lemos E.G.M."/>
            <person name="Machado M.A."/>
            <person name="Ferro M.I.T."/>
            <person name="da Silva F.R."/>
            <person name="Goldman M.H.S."/>
            <person name="Goldman G.H."/>
            <person name="Lemos M.V.F."/>
            <person name="El-Dorry H."/>
            <person name="Tsai S.M."/>
            <person name="Carrer H."/>
            <person name="Carraro D.M."/>
            <person name="de Oliveira R.C."/>
            <person name="Nunes L.R."/>
            <person name="Siqueira W.J."/>
            <person name="Coutinho L.L."/>
            <person name="Kimura E.T."/>
            <person name="Ferro E.S."/>
            <person name="Harakava R."/>
            <person name="Kuramae E.E."/>
            <person name="Marino C.L."/>
            <person name="Giglioti E."/>
            <person name="Abreu I.L."/>
            <person name="Alves L.M.C."/>
            <person name="do Amaral A.M."/>
            <person name="Baia G.S."/>
            <person name="Blanco S.R."/>
            <person name="Brito M.S."/>
            <person name="Cannavan F.S."/>
            <person name="Celestino A.V."/>
            <person name="da Cunha A.F."/>
            <person name="Fenille R.C."/>
            <person name="Ferro J.A."/>
            <person name="Formighieri E.F."/>
            <person name="Kishi L.T."/>
            <person name="Leoni S.G."/>
            <person name="Oliveira A.R."/>
            <person name="Rosa V.E. Jr."/>
            <person name="Sassaki F.T."/>
            <person name="Sena J.A.D."/>
            <person name="de Souza A.A."/>
            <person name="Truffi D."/>
            <person name="Tsukumo F."/>
            <person name="Yanai G.M."/>
            <person name="Zaros L.G."/>
            <person name="Civerolo E.L."/>
            <person name="Simpson A.J.G."/>
            <person name="Almeida N.F. Jr."/>
            <person name="Setubal J.C."/>
            <person name="Kitajima J.P."/>
        </authorList>
    </citation>
    <scope>NUCLEOTIDE SEQUENCE [LARGE SCALE GENOMIC DNA]</scope>
    <source>
        <strain>Temecula1 / ATCC 700964</strain>
    </source>
</reference>
<gene>
    <name evidence="1" type="primary">infB</name>
    <name type="ordered locus">PD_0194</name>
</gene>
<accession>Q87EV4</accession>
<comment type="function">
    <text evidence="1">One of the essential components for the initiation of protein synthesis. Protects formylmethionyl-tRNA from spontaneous hydrolysis and promotes its binding to the 30S ribosomal subunits. Also involved in the hydrolysis of GTP during the formation of the 70S ribosomal complex.</text>
</comment>
<comment type="subcellular location">
    <subcellularLocation>
        <location evidence="1">Cytoplasm</location>
    </subcellularLocation>
</comment>
<comment type="similarity">
    <text evidence="1">Belongs to the TRAFAC class translation factor GTPase superfamily. Classic translation factor GTPase family. IF-2 subfamily.</text>
</comment>
<keyword id="KW-0963">Cytoplasm</keyword>
<keyword id="KW-0342">GTP-binding</keyword>
<keyword id="KW-0396">Initiation factor</keyword>
<keyword id="KW-0547">Nucleotide-binding</keyword>
<keyword id="KW-0648">Protein biosynthesis</keyword>
<keyword id="KW-1185">Reference proteome</keyword>